<feature type="chain" id="PRO_1000065998" description="Alanine racemase">
    <location>
        <begin position="1"/>
        <end position="376"/>
    </location>
</feature>
<feature type="active site" description="Proton acceptor; specific for D-alanine" evidence="1">
    <location>
        <position position="40"/>
    </location>
</feature>
<feature type="active site" description="Proton acceptor; specific for L-alanine" evidence="1">
    <location>
        <position position="270"/>
    </location>
</feature>
<feature type="binding site" evidence="1">
    <location>
        <position position="138"/>
    </location>
    <ligand>
        <name>substrate</name>
    </ligand>
</feature>
<feature type="binding site" evidence="1">
    <location>
        <position position="317"/>
    </location>
    <ligand>
        <name>substrate</name>
    </ligand>
</feature>
<feature type="modified residue" description="N6-(pyridoxal phosphate)lysine" evidence="1">
    <location>
        <position position="40"/>
    </location>
</feature>
<evidence type="ECO:0000255" key="1">
    <source>
        <dbReference type="HAMAP-Rule" id="MF_01201"/>
    </source>
</evidence>
<accession>Q1GBP6</accession>
<dbReference type="EC" id="5.1.1.1" evidence="1"/>
<dbReference type="EMBL" id="CR954253">
    <property type="protein sequence ID" value="CAI97198.1"/>
    <property type="molecule type" value="Genomic_DNA"/>
</dbReference>
<dbReference type="RefSeq" id="WP_011543628.1">
    <property type="nucleotide sequence ID" value="NC_008054.1"/>
</dbReference>
<dbReference type="SMR" id="Q1GBP6"/>
<dbReference type="STRING" id="390333.Ldb0360"/>
<dbReference type="KEGG" id="ldb:Ldb0360"/>
<dbReference type="PATRIC" id="fig|390333.13.peg.428"/>
<dbReference type="eggNOG" id="COG0787">
    <property type="taxonomic scope" value="Bacteria"/>
</dbReference>
<dbReference type="HOGENOM" id="CLU_028393_2_1_9"/>
<dbReference type="BioCyc" id="LDEL390333:LDB_RS01515-MONOMER"/>
<dbReference type="UniPathway" id="UPA00042">
    <property type="reaction ID" value="UER00497"/>
</dbReference>
<dbReference type="Proteomes" id="UP000001259">
    <property type="component" value="Chromosome"/>
</dbReference>
<dbReference type="GO" id="GO:0005829">
    <property type="term" value="C:cytosol"/>
    <property type="evidence" value="ECO:0007669"/>
    <property type="project" value="TreeGrafter"/>
</dbReference>
<dbReference type="GO" id="GO:0008784">
    <property type="term" value="F:alanine racemase activity"/>
    <property type="evidence" value="ECO:0007669"/>
    <property type="project" value="UniProtKB-UniRule"/>
</dbReference>
<dbReference type="GO" id="GO:0030170">
    <property type="term" value="F:pyridoxal phosphate binding"/>
    <property type="evidence" value="ECO:0007669"/>
    <property type="project" value="UniProtKB-UniRule"/>
</dbReference>
<dbReference type="GO" id="GO:0030632">
    <property type="term" value="P:D-alanine biosynthetic process"/>
    <property type="evidence" value="ECO:0007669"/>
    <property type="project" value="UniProtKB-UniRule"/>
</dbReference>
<dbReference type="GO" id="GO:0009252">
    <property type="term" value="P:peptidoglycan biosynthetic process"/>
    <property type="evidence" value="ECO:0007669"/>
    <property type="project" value="TreeGrafter"/>
</dbReference>
<dbReference type="CDD" id="cd00430">
    <property type="entry name" value="PLPDE_III_AR"/>
    <property type="match status" value="1"/>
</dbReference>
<dbReference type="FunFam" id="3.20.20.10:FF:000002">
    <property type="entry name" value="Alanine racemase"/>
    <property type="match status" value="1"/>
</dbReference>
<dbReference type="Gene3D" id="3.20.20.10">
    <property type="entry name" value="Alanine racemase"/>
    <property type="match status" value="1"/>
</dbReference>
<dbReference type="Gene3D" id="2.40.37.10">
    <property type="entry name" value="Lyase, Ornithine Decarboxylase, Chain A, domain 1"/>
    <property type="match status" value="1"/>
</dbReference>
<dbReference type="HAMAP" id="MF_01201">
    <property type="entry name" value="Ala_racemase"/>
    <property type="match status" value="1"/>
</dbReference>
<dbReference type="InterPro" id="IPR000821">
    <property type="entry name" value="Ala_racemase"/>
</dbReference>
<dbReference type="InterPro" id="IPR009006">
    <property type="entry name" value="Ala_racemase/Decarboxylase_C"/>
</dbReference>
<dbReference type="InterPro" id="IPR011079">
    <property type="entry name" value="Ala_racemase_C"/>
</dbReference>
<dbReference type="InterPro" id="IPR001608">
    <property type="entry name" value="Ala_racemase_N"/>
</dbReference>
<dbReference type="InterPro" id="IPR020622">
    <property type="entry name" value="Ala_racemase_pyridoxalP-BS"/>
</dbReference>
<dbReference type="InterPro" id="IPR029066">
    <property type="entry name" value="PLP-binding_barrel"/>
</dbReference>
<dbReference type="NCBIfam" id="TIGR00492">
    <property type="entry name" value="alr"/>
    <property type="match status" value="1"/>
</dbReference>
<dbReference type="PANTHER" id="PTHR30511">
    <property type="entry name" value="ALANINE RACEMASE"/>
    <property type="match status" value="1"/>
</dbReference>
<dbReference type="PANTHER" id="PTHR30511:SF0">
    <property type="entry name" value="ALANINE RACEMASE, CATABOLIC-RELATED"/>
    <property type="match status" value="1"/>
</dbReference>
<dbReference type="Pfam" id="PF00842">
    <property type="entry name" value="Ala_racemase_C"/>
    <property type="match status" value="1"/>
</dbReference>
<dbReference type="Pfam" id="PF01168">
    <property type="entry name" value="Ala_racemase_N"/>
    <property type="match status" value="1"/>
</dbReference>
<dbReference type="PRINTS" id="PR00992">
    <property type="entry name" value="ALARACEMASE"/>
</dbReference>
<dbReference type="SMART" id="SM01005">
    <property type="entry name" value="Ala_racemase_C"/>
    <property type="match status" value="1"/>
</dbReference>
<dbReference type="SUPFAM" id="SSF50621">
    <property type="entry name" value="Alanine racemase C-terminal domain-like"/>
    <property type="match status" value="1"/>
</dbReference>
<dbReference type="SUPFAM" id="SSF51419">
    <property type="entry name" value="PLP-binding barrel"/>
    <property type="match status" value="1"/>
</dbReference>
<dbReference type="PROSITE" id="PS00395">
    <property type="entry name" value="ALANINE_RACEMASE"/>
    <property type="match status" value="1"/>
</dbReference>
<proteinExistence type="inferred from homology"/>
<sequence>MITAVNRPAALHINLAAIKENTRQAKAHLKPGQKLFCVVKANAYGHGAARLAPVMEEAGADGFCVAMLDEGLELRRAQIVKPILVLGLQPAEEAALAAANDISLPVSSLDWLKKAEKVLRKEGLQLKIHLAIDSGMGRIGFSEDEDFKAVNEYLQGNDAFFVEGMFTHFASADSADASYFDYQVKRFKHMESLLTVKPKWIHVDNTAAILFDKDVASDIVRFGIGLYGLNPSSAPGSRDLEPAFALKPAMSFVSELTYVKQIHKGYGVGYGSTHIAEEDEWIGTVPVGYADGWIRKFQGFKVKVGDTYCPIVGRVCMDQFMVLLPKEVPAGTPVELISADPAAPNSLRRAADWLDTIHYEVACQFNDRLDRIYDNE</sequence>
<comment type="function">
    <text evidence="1">Catalyzes the interconversion of L-alanine and D-alanine. May also act on other amino acids.</text>
</comment>
<comment type="catalytic activity">
    <reaction evidence="1">
        <text>L-alanine = D-alanine</text>
        <dbReference type="Rhea" id="RHEA:20249"/>
        <dbReference type="ChEBI" id="CHEBI:57416"/>
        <dbReference type="ChEBI" id="CHEBI:57972"/>
        <dbReference type="EC" id="5.1.1.1"/>
    </reaction>
</comment>
<comment type="cofactor">
    <cofactor evidence="1">
        <name>pyridoxal 5'-phosphate</name>
        <dbReference type="ChEBI" id="CHEBI:597326"/>
    </cofactor>
</comment>
<comment type="pathway">
    <text evidence="1">Amino-acid biosynthesis; D-alanine biosynthesis; D-alanine from L-alanine: step 1/1.</text>
</comment>
<comment type="similarity">
    <text evidence="1">Belongs to the alanine racemase family.</text>
</comment>
<protein>
    <recommendedName>
        <fullName evidence="1">Alanine racemase</fullName>
        <ecNumber evidence="1">5.1.1.1</ecNumber>
    </recommendedName>
</protein>
<keyword id="KW-0413">Isomerase</keyword>
<keyword id="KW-0663">Pyridoxal phosphate</keyword>
<keyword id="KW-1185">Reference proteome</keyword>
<name>ALR_LACDA</name>
<organism>
    <name type="scientific">Lactobacillus delbrueckii subsp. bulgaricus (strain ATCC 11842 / DSM 20081 / BCRC 10696 / JCM 1002 / NBRC 13953 / NCIMB 11778 / NCTC 12712 / WDCM 00102 / Lb 14)</name>
    <dbReference type="NCBI Taxonomy" id="390333"/>
    <lineage>
        <taxon>Bacteria</taxon>
        <taxon>Bacillati</taxon>
        <taxon>Bacillota</taxon>
        <taxon>Bacilli</taxon>
        <taxon>Lactobacillales</taxon>
        <taxon>Lactobacillaceae</taxon>
        <taxon>Lactobacillus</taxon>
    </lineage>
</organism>
<gene>
    <name type="primary">alr</name>
    <name type="ordered locus">Ldb0360</name>
</gene>
<reference key="1">
    <citation type="journal article" date="2006" name="Proc. Natl. Acad. Sci. U.S.A.">
        <title>The complete genome sequence of Lactobacillus bulgaricus reveals extensive and ongoing reductive evolution.</title>
        <authorList>
            <person name="van de Guchte M."/>
            <person name="Penaud S."/>
            <person name="Grimaldi C."/>
            <person name="Barbe V."/>
            <person name="Bryson K."/>
            <person name="Nicolas P."/>
            <person name="Robert C."/>
            <person name="Oztas S."/>
            <person name="Mangenot S."/>
            <person name="Couloux A."/>
            <person name="Loux V."/>
            <person name="Dervyn R."/>
            <person name="Bossy R."/>
            <person name="Bolotin A."/>
            <person name="Batto J.-M."/>
            <person name="Walunas T."/>
            <person name="Gibrat J.-F."/>
            <person name="Bessieres P."/>
            <person name="Weissenbach J."/>
            <person name="Ehrlich S.D."/>
            <person name="Maguin E."/>
        </authorList>
    </citation>
    <scope>NUCLEOTIDE SEQUENCE [LARGE SCALE GENOMIC DNA]</scope>
    <source>
        <strain>ATCC 11842 / DSM 20081 / BCRC 10696 / JCM 1002 / NBRC 13953 / NCIMB 11778 / NCTC 12712 / WDCM 00102 / Lb 14</strain>
    </source>
</reference>